<comment type="function">
    <text evidence="1">Catalyzes the stereoinversion of LL-2,6-diaminopimelate (L,L-DAP) to meso-diaminopimelate (meso-DAP), a precursor of L-lysine and an essential component of the bacterial peptidoglycan.</text>
</comment>
<comment type="catalytic activity">
    <reaction evidence="1">
        <text>(2S,6S)-2,6-diaminopimelate = meso-2,6-diaminopimelate</text>
        <dbReference type="Rhea" id="RHEA:15393"/>
        <dbReference type="ChEBI" id="CHEBI:57609"/>
        <dbReference type="ChEBI" id="CHEBI:57791"/>
        <dbReference type="EC" id="5.1.1.7"/>
    </reaction>
</comment>
<comment type="pathway">
    <text evidence="1">Amino-acid biosynthesis; L-lysine biosynthesis via DAP pathway; DL-2,6-diaminopimelate from LL-2,6-diaminopimelate: step 1/1.</text>
</comment>
<comment type="subunit">
    <text evidence="1">Homodimer.</text>
</comment>
<comment type="subcellular location">
    <subcellularLocation>
        <location evidence="1">Cytoplasm</location>
    </subcellularLocation>
</comment>
<comment type="similarity">
    <text evidence="1">Belongs to the diaminopimelate epimerase family.</text>
</comment>
<evidence type="ECO:0000255" key="1">
    <source>
        <dbReference type="HAMAP-Rule" id="MF_00197"/>
    </source>
</evidence>
<accession>Q8D2T4</accession>
<feature type="chain" id="PRO_0000149879" description="Diaminopimelate epimerase">
    <location>
        <begin position="1"/>
        <end position="276"/>
    </location>
</feature>
<feature type="active site" description="Proton donor" evidence="1">
    <location>
        <position position="73"/>
    </location>
</feature>
<feature type="active site" description="Proton acceptor" evidence="1">
    <location>
        <position position="219"/>
    </location>
</feature>
<feature type="binding site" evidence="1">
    <location>
        <position position="11"/>
    </location>
    <ligand>
        <name>substrate</name>
    </ligand>
</feature>
<feature type="binding site" evidence="1">
    <location>
        <position position="44"/>
    </location>
    <ligand>
        <name>substrate</name>
    </ligand>
</feature>
<feature type="binding site" evidence="1">
    <location>
        <position position="64"/>
    </location>
    <ligand>
        <name>substrate</name>
    </ligand>
</feature>
<feature type="binding site" evidence="1">
    <location>
        <begin position="74"/>
        <end position="75"/>
    </location>
    <ligand>
        <name>substrate</name>
    </ligand>
</feature>
<feature type="binding site" evidence="1">
    <location>
        <position position="159"/>
    </location>
    <ligand>
        <name>substrate</name>
    </ligand>
</feature>
<feature type="binding site" evidence="1">
    <location>
        <position position="192"/>
    </location>
    <ligand>
        <name>substrate</name>
    </ligand>
</feature>
<feature type="binding site" evidence="1">
    <location>
        <begin position="210"/>
        <end position="211"/>
    </location>
    <ligand>
        <name>substrate</name>
    </ligand>
</feature>
<feature type="binding site" evidence="1">
    <location>
        <begin position="220"/>
        <end position="221"/>
    </location>
    <ligand>
        <name>substrate</name>
    </ligand>
</feature>
<feature type="site" description="Could be important to modulate the pK values of the two catalytic cysteine residues" evidence="1">
    <location>
        <position position="161"/>
    </location>
</feature>
<feature type="site" description="Could be important to modulate the pK values of the two catalytic cysteine residues" evidence="1">
    <location>
        <position position="210"/>
    </location>
</feature>
<feature type="site" description="Important for dimerization" evidence="1">
    <location>
        <position position="270"/>
    </location>
</feature>
<reference key="1">
    <citation type="journal article" date="2002" name="Nat. Genet.">
        <title>Genome sequence of the endocellular obligate symbiont of tsetse flies, Wigglesworthia glossinidia.</title>
        <authorList>
            <person name="Akman L."/>
            <person name="Yamashita A."/>
            <person name="Watanabe H."/>
            <person name="Oshima K."/>
            <person name="Shiba T."/>
            <person name="Hattori M."/>
            <person name="Aksoy S."/>
        </authorList>
    </citation>
    <scope>NUCLEOTIDE SEQUENCE [LARGE SCALE GENOMIC DNA]</scope>
</reference>
<proteinExistence type="inferred from homology"/>
<protein>
    <recommendedName>
        <fullName evidence="1">Diaminopimelate epimerase</fullName>
        <shortName evidence="1">DAP epimerase</shortName>
        <ecNumber evidence="1">5.1.1.7</ecNumber>
    </recommendedName>
    <alternativeName>
        <fullName evidence="1">PLP-independent amino acid racemase</fullName>
    </alternativeName>
</protein>
<gene>
    <name evidence="1" type="primary">dapF</name>
    <name type="ordered locus">WIGBR2700</name>
</gene>
<dbReference type="EC" id="5.1.1.7" evidence="1"/>
<dbReference type="EMBL" id="BA000021">
    <property type="protein sequence ID" value="BAC24416.1"/>
    <property type="molecule type" value="Genomic_DNA"/>
</dbReference>
<dbReference type="SMR" id="Q8D2T4"/>
<dbReference type="STRING" id="36870.gene:10368763"/>
<dbReference type="KEGG" id="wbr:dapF"/>
<dbReference type="eggNOG" id="COG0253">
    <property type="taxonomic scope" value="Bacteria"/>
</dbReference>
<dbReference type="HOGENOM" id="CLU_053306_1_1_6"/>
<dbReference type="OrthoDB" id="9805408at2"/>
<dbReference type="UniPathway" id="UPA00034">
    <property type="reaction ID" value="UER00025"/>
</dbReference>
<dbReference type="Proteomes" id="UP000000562">
    <property type="component" value="Chromosome"/>
</dbReference>
<dbReference type="GO" id="GO:0005829">
    <property type="term" value="C:cytosol"/>
    <property type="evidence" value="ECO:0007669"/>
    <property type="project" value="TreeGrafter"/>
</dbReference>
<dbReference type="GO" id="GO:0008837">
    <property type="term" value="F:diaminopimelate epimerase activity"/>
    <property type="evidence" value="ECO:0007669"/>
    <property type="project" value="UniProtKB-UniRule"/>
</dbReference>
<dbReference type="GO" id="GO:0009089">
    <property type="term" value="P:lysine biosynthetic process via diaminopimelate"/>
    <property type="evidence" value="ECO:0007669"/>
    <property type="project" value="UniProtKB-UniRule"/>
</dbReference>
<dbReference type="Gene3D" id="3.10.310.10">
    <property type="entry name" value="Diaminopimelate Epimerase, Chain A, domain 1"/>
    <property type="match status" value="2"/>
</dbReference>
<dbReference type="HAMAP" id="MF_00197">
    <property type="entry name" value="DAP_epimerase"/>
    <property type="match status" value="1"/>
</dbReference>
<dbReference type="InterPro" id="IPR018510">
    <property type="entry name" value="DAP_epimerase_AS"/>
</dbReference>
<dbReference type="InterPro" id="IPR001653">
    <property type="entry name" value="DAP_epimerase_DapF"/>
</dbReference>
<dbReference type="NCBIfam" id="TIGR00652">
    <property type="entry name" value="DapF"/>
    <property type="match status" value="1"/>
</dbReference>
<dbReference type="PANTHER" id="PTHR31689:SF0">
    <property type="entry name" value="DIAMINOPIMELATE EPIMERASE"/>
    <property type="match status" value="1"/>
</dbReference>
<dbReference type="PANTHER" id="PTHR31689">
    <property type="entry name" value="DIAMINOPIMELATE EPIMERASE, CHLOROPLASTIC"/>
    <property type="match status" value="1"/>
</dbReference>
<dbReference type="Pfam" id="PF01678">
    <property type="entry name" value="DAP_epimerase"/>
    <property type="match status" value="2"/>
</dbReference>
<dbReference type="SUPFAM" id="SSF54506">
    <property type="entry name" value="Diaminopimelate epimerase-like"/>
    <property type="match status" value="2"/>
</dbReference>
<dbReference type="PROSITE" id="PS01326">
    <property type="entry name" value="DAP_EPIMERASE"/>
    <property type="match status" value="1"/>
</dbReference>
<organism>
    <name type="scientific">Wigglesworthia glossinidia brevipalpis</name>
    <dbReference type="NCBI Taxonomy" id="36870"/>
    <lineage>
        <taxon>Bacteria</taxon>
        <taxon>Pseudomonadati</taxon>
        <taxon>Pseudomonadota</taxon>
        <taxon>Gammaproteobacteria</taxon>
        <taxon>Enterobacterales</taxon>
        <taxon>Erwiniaceae</taxon>
        <taxon>Wigglesworthia</taxon>
    </lineage>
</organism>
<keyword id="KW-0028">Amino-acid biosynthesis</keyword>
<keyword id="KW-0963">Cytoplasm</keyword>
<keyword id="KW-0413">Isomerase</keyword>
<keyword id="KW-0457">Lysine biosynthesis</keyword>
<keyword id="KW-1185">Reference proteome</keyword>
<sequence>MKFSKMHSLGNDFVIVNNIDKKNNISPIFIKKLSDRYTGIGFDQLILIEFFCKKYFYFKIKIFNSDSSESFQCINGIRCVFMFLKIKKLIKKNIAFIGNNLGLSKTLMTKNKLICVKIKPPRFYIEKDILVNPKYNNKEKIILRIFKKKITCYFVFVGNPHCIIISKNIEYNNFSLLSKYLLKNNIFPNKINISIMNILDFDLIKLKVYERGSGETQSCGSAAAAAAAVAIYYKKLNKKIKVNFSRGNLYVYWEKIGNFMSIIGPANHIYDGKINF</sequence>
<name>DAPF_WIGBR</name>